<organism>
    <name type="scientific">Yersinia pseudotuberculosis serotype O:3 (strain YPIII)</name>
    <dbReference type="NCBI Taxonomy" id="502800"/>
    <lineage>
        <taxon>Bacteria</taxon>
        <taxon>Pseudomonadati</taxon>
        <taxon>Pseudomonadota</taxon>
        <taxon>Gammaproteobacteria</taxon>
        <taxon>Enterobacterales</taxon>
        <taxon>Yersiniaceae</taxon>
        <taxon>Yersinia</taxon>
    </lineage>
</organism>
<name>DAPF_YERPY</name>
<dbReference type="EC" id="5.1.1.7" evidence="1"/>
<dbReference type="EMBL" id="CP000950">
    <property type="protein sequence ID" value="ACA70274.1"/>
    <property type="molecule type" value="Genomic_DNA"/>
</dbReference>
<dbReference type="RefSeq" id="WP_002211471.1">
    <property type="nucleotide sequence ID" value="NZ_CP009792.1"/>
</dbReference>
<dbReference type="SMR" id="B1JPE1"/>
<dbReference type="GeneID" id="57974864"/>
<dbReference type="KEGG" id="ypy:YPK_4011"/>
<dbReference type="PATRIC" id="fig|502800.11.peg.360"/>
<dbReference type="UniPathway" id="UPA00034">
    <property type="reaction ID" value="UER00025"/>
</dbReference>
<dbReference type="GO" id="GO:0005829">
    <property type="term" value="C:cytosol"/>
    <property type="evidence" value="ECO:0007669"/>
    <property type="project" value="TreeGrafter"/>
</dbReference>
<dbReference type="GO" id="GO:0008837">
    <property type="term" value="F:diaminopimelate epimerase activity"/>
    <property type="evidence" value="ECO:0007669"/>
    <property type="project" value="UniProtKB-UniRule"/>
</dbReference>
<dbReference type="GO" id="GO:0009089">
    <property type="term" value="P:lysine biosynthetic process via diaminopimelate"/>
    <property type="evidence" value="ECO:0007669"/>
    <property type="project" value="UniProtKB-UniRule"/>
</dbReference>
<dbReference type="FunFam" id="3.10.310.10:FF:000001">
    <property type="entry name" value="Diaminopimelate epimerase"/>
    <property type="match status" value="1"/>
</dbReference>
<dbReference type="FunFam" id="3.10.310.10:FF:000002">
    <property type="entry name" value="Diaminopimelate epimerase"/>
    <property type="match status" value="1"/>
</dbReference>
<dbReference type="Gene3D" id="3.10.310.10">
    <property type="entry name" value="Diaminopimelate Epimerase, Chain A, domain 1"/>
    <property type="match status" value="2"/>
</dbReference>
<dbReference type="HAMAP" id="MF_00197">
    <property type="entry name" value="DAP_epimerase"/>
    <property type="match status" value="1"/>
</dbReference>
<dbReference type="InterPro" id="IPR018510">
    <property type="entry name" value="DAP_epimerase_AS"/>
</dbReference>
<dbReference type="InterPro" id="IPR001653">
    <property type="entry name" value="DAP_epimerase_DapF"/>
</dbReference>
<dbReference type="NCBIfam" id="TIGR00652">
    <property type="entry name" value="DapF"/>
    <property type="match status" value="1"/>
</dbReference>
<dbReference type="PANTHER" id="PTHR31689:SF0">
    <property type="entry name" value="DIAMINOPIMELATE EPIMERASE"/>
    <property type="match status" value="1"/>
</dbReference>
<dbReference type="PANTHER" id="PTHR31689">
    <property type="entry name" value="DIAMINOPIMELATE EPIMERASE, CHLOROPLASTIC"/>
    <property type="match status" value="1"/>
</dbReference>
<dbReference type="Pfam" id="PF01678">
    <property type="entry name" value="DAP_epimerase"/>
    <property type="match status" value="2"/>
</dbReference>
<dbReference type="SUPFAM" id="SSF54506">
    <property type="entry name" value="Diaminopimelate epimerase-like"/>
    <property type="match status" value="1"/>
</dbReference>
<dbReference type="PROSITE" id="PS01326">
    <property type="entry name" value="DAP_EPIMERASE"/>
    <property type="match status" value="1"/>
</dbReference>
<proteinExistence type="inferred from homology"/>
<evidence type="ECO:0000255" key="1">
    <source>
        <dbReference type="HAMAP-Rule" id="MF_00197"/>
    </source>
</evidence>
<gene>
    <name evidence="1" type="primary">dapF</name>
    <name type="ordered locus">YPK_4011</name>
</gene>
<reference key="1">
    <citation type="submission" date="2008-02" db="EMBL/GenBank/DDBJ databases">
        <title>Complete sequence of Yersinia pseudotuberculosis YPIII.</title>
        <authorList>
            <consortium name="US DOE Joint Genome Institute"/>
            <person name="Copeland A."/>
            <person name="Lucas S."/>
            <person name="Lapidus A."/>
            <person name="Glavina del Rio T."/>
            <person name="Dalin E."/>
            <person name="Tice H."/>
            <person name="Bruce D."/>
            <person name="Goodwin L."/>
            <person name="Pitluck S."/>
            <person name="Munk A.C."/>
            <person name="Brettin T."/>
            <person name="Detter J.C."/>
            <person name="Han C."/>
            <person name="Tapia R."/>
            <person name="Schmutz J."/>
            <person name="Larimer F."/>
            <person name="Land M."/>
            <person name="Hauser L."/>
            <person name="Challacombe J.F."/>
            <person name="Green L."/>
            <person name="Lindler L.E."/>
            <person name="Nikolich M.P."/>
            <person name="Richardson P."/>
        </authorList>
    </citation>
    <scope>NUCLEOTIDE SEQUENCE [LARGE SCALE GENOMIC DNA]</scope>
    <source>
        <strain>YPIII</strain>
    </source>
</reference>
<accession>B1JPE1</accession>
<protein>
    <recommendedName>
        <fullName evidence="1">Diaminopimelate epimerase</fullName>
        <shortName evidence="1">DAP epimerase</shortName>
        <ecNumber evidence="1">5.1.1.7</ecNumber>
    </recommendedName>
    <alternativeName>
        <fullName evidence="1">PLP-independent amino acid racemase</fullName>
    </alternativeName>
</protein>
<comment type="function">
    <text evidence="1">Catalyzes the stereoinversion of LL-2,6-diaminopimelate (L,L-DAP) to meso-diaminopimelate (meso-DAP), a precursor of L-lysine and an essential component of the bacterial peptidoglycan.</text>
</comment>
<comment type="catalytic activity">
    <reaction evidence="1">
        <text>(2S,6S)-2,6-diaminopimelate = meso-2,6-diaminopimelate</text>
        <dbReference type="Rhea" id="RHEA:15393"/>
        <dbReference type="ChEBI" id="CHEBI:57609"/>
        <dbReference type="ChEBI" id="CHEBI:57791"/>
        <dbReference type="EC" id="5.1.1.7"/>
    </reaction>
</comment>
<comment type="pathway">
    <text evidence="1">Amino-acid biosynthesis; L-lysine biosynthesis via DAP pathway; DL-2,6-diaminopimelate from LL-2,6-diaminopimelate: step 1/1.</text>
</comment>
<comment type="subunit">
    <text evidence="1">Homodimer.</text>
</comment>
<comment type="subcellular location">
    <subcellularLocation>
        <location evidence="1">Cytoplasm</location>
    </subcellularLocation>
</comment>
<comment type="similarity">
    <text evidence="1">Belongs to the diaminopimelate epimerase family.</text>
</comment>
<sequence length="274" mass="30252">MQFSKMHGLGNDFMVVDAVTQNVYFSPELIRRLADRHTGVGFDQMLVVEPPYDPELDFHYRIFNADGSEVSQCGNGARCFARFVRLKGLTNKREISVSTQTGRMILSVTEDEQVCVNMGEPDFEPQTVPFRAAKAEKTYILRAAEHTVLCGVVSMGNPHCVMQVDDVSVANVALLGPVLENHERFPERANIGFMQVVSRDHIRLRVYERGAGETQACGSGACAAVAVGVVQDLLNENVHVELPGGSLHIRWQGPGHPLYMTGPATHVYDGFIHL</sequence>
<feature type="chain" id="PRO_1000099276" description="Diaminopimelate epimerase">
    <location>
        <begin position="1"/>
        <end position="274"/>
    </location>
</feature>
<feature type="active site" description="Proton donor" evidence="1">
    <location>
        <position position="73"/>
    </location>
</feature>
<feature type="active site" description="Proton acceptor" evidence="1">
    <location>
        <position position="217"/>
    </location>
</feature>
<feature type="binding site" evidence="1">
    <location>
        <position position="11"/>
    </location>
    <ligand>
        <name>substrate</name>
    </ligand>
</feature>
<feature type="binding site" evidence="1">
    <location>
        <position position="44"/>
    </location>
    <ligand>
        <name>substrate</name>
    </ligand>
</feature>
<feature type="binding site" evidence="1">
    <location>
        <position position="64"/>
    </location>
    <ligand>
        <name>substrate</name>
    </ligand>
</feature>
<feature type="binding site" evidence="1">
    <location>
        <begin position="74"/>
        <end position="75"/>
    </location>
    <ligand>
        <name>substrate</name>
    </ligand>
</feature>
<feature type="binding site" evidence="1">
    <location>
        <position position="157"/>
    </location>
    <ligand>
        <name>substrate</name>
    </ligand>
</feature>
<feature type="binding site" evidence="1">
    <location>
        <position position="190"/>
    </location>
    <ligand>
        <name>substrate</name>
    </ligand>
</feature>
<feature type="binding site" evidence="1">
    <location>
        <begin position="208"/>
        <end position="209"/>
    </location>
    <ligand>
        <name>substrate</name>
    </ligand>
</feature>
<feature type="binding site" evidence="1">
    <location>
        <begin position="218"/>
        <end position="219"/>
    </location>
    <ligand>
        <name>substrate</name>
    </ligand>
</feature>
<feature type="site" description="Could be important to modulate the pK values of the two catalytic cysteine residues" evidence="1">
    <location>
        <position position="159"/>
    </location>
</feature>
<feature type="site" description="Could be important to modulate the pK values of the two catalytic cysteine residues" evidence="1">
    <location>
        <position position="208"/>
    </location>
</feature>
<feature type="site" description="Important for dimerization" evidence="1">
    <location>
        <position position="268"/>
    </location>
</feature>
<keyword id="KW-0028">Amino-acid biosynthesis</keyword>
<keyword id="KW-0963">Cytoplasm</keyword>
<keyword id="KW-0413">Isomerase</keyword>
<keyword id="KW-0457">Lysine biosynthesis</keyword>